<proteinExistence type="evidence at protein level"/>
<sequence>MSNMNQTIMDAFHFRHATKQFDPQKKVSKEDFETILESGRLSPSSLGLEPWKFVVIQDQALRDELKAHSWGAAKQLDTASHFVLIFARKNVTSRSPYVQHMLRDIKKYEAQTIPAVEQKFDAFQADFHISDNDQALYDWSSKQTYIALGNMMTTAALLGIDSCPMEGFSLDTVTDILANKGILDTEQFGLSVMVAFGYRQQDPPKNKTRQAYEDVIEWVGPKE</sequence>
<evidence type="ECO:0000305" key="1"/>
<keyword id="KW-0285">Flavoprotein</keyword>
<keyword id="KW-0288">FMN</keyword>
<keyword id="KW-0520">NAD</keyword>
<keyword id="KW-0521">NADP</keyword>
<keyword id="KW-0560">Oxidoreductase</keyword>
<comment type="cofactor">
    <cofactor evidence="1">
        <name>FMN</name>
        <dbReference type="ChEBI" id="CHEBI:58210"/>
    </cofactor>
</comment>
<comment type="similarity">
    <text evidence="1">Belongs to the nitroreductase family.</text>
</comment>
<gene>
    <name type="ordered locus">SA2311</name>
</gene>
<reference key="1">
    <citation type="journal article" date="2001" name="Lancet">
        <title>Whole genome sequencing of meticillin-resistant Staphylococcus aureus.</title>
        <authorList>
            <person name="Kuroda M."/>
            <person name="Ohta T."/>
            <person name="Uchiyama I."/>
            <person name="Baba T."/>
            <person name="Yuzawa H."/>
            <person name="Kobayashi I."/>
            <person name="Cui L."/>
            <person name="Oguchi A."/>
            <person name="Aoki K."/>
            <person name="Nagai Y."/>
            <person name="Lian J.-Q."/>
            <person name="Ito T."/>
            <person name="Kanamori M."/>
            <person name="Matsumaru H."/>
            <person name="Maruyama A."/>
            <person name="Murakami H."/>
            <person name="Hosoyama A."/>
            <person name="Mizutani-Ui Y."/>
            <person name="Takahashi N.K."/>
            <person name="Sawano T."/>
            <person name="Inoue R."/>
            <person name="Kaito C."/>
            <person name="Sekimizu K."/>
            <person name="Hirakawa H."/>
            <person name="Kuhara S."/>
            <person name="Goto S."/>
            <person name="Yabuzaki J."/>
            <person name="Kanehisa M."/>
            <person name="Yamashita A."/>
            <person name="Oshima K."/>
            <person name="Furuya K."/>
            <person name="Yoshino C."/>
            <person name="Shiba T."/>
            <person name="Hattori M."/>
            <person name="Ogasawara N."/>
            <person name="Hayashi H."/>
            <person name="Hiramatsu K."/>
        </authorList>
    </citation>
    <scope>NUCLEOTIDE SEQUENCE [LARGE SCALE GENOMIC DNA]</scope>
    <source>
        <strain>N315</strain>
    </source>
</reference>
<reference key="2">
    <citation type="journal article" date="2005" name="J. Microbiol. Methods">
        <title>Correlation of proteomic and transcriptomic profiles of Staphylococcus aureus during the post-exponential phase of growth.</title>
        <authorList>
            <person name="Scherl A."/>
            <person name="Francois P."/>
            <person name="Bento M."/>
            <person name="Deshusses J.M."/>
            <person name="Charbonnier Y."/>
            <person name="Converset V."/>
            <person name="Huyghe A."/>
            <person name="Walter N."/>
            <person name="Hoogland C."/>
            <person name="Appel R.D."/>
            <person name="Sanchez J.-C."/>
            <person name="Zimmermann-Ivol C.G."/>
            <person name="Corthals G.L."/>
            <person name="Hochstrasser D.F."/>
            <person name="Schrenzel J."/>
        </authorList>
    </citation>
    <scope>IDENTIFICATION BY MASS SPECTROMETRY</scope>
    <source>
        <strain>N315</strain>
    </source>
</reference>
<reference key="3">
    <citation type="submission" date="2007-10" db="UniProtKB">
        <title>Shotgun proteomic analysis of total and membrane protein extracts of S. aureus strain N315.</title>
        <authorList>
            <person name="Vaezzadeh A.R."/>
            <person name="Deshusses J."/>
            <person name="Lescuyer P."/>
            <person name="Hochstrasser D.F."/>
        </authorList>
    </citation>
    <scope>IDENTIFICATION BY MASS SPECTROMETRY [LARGE SCALE ANALYSIS]</scope>
    <source>
        <strain>N315</strain>
    </source>
</reference>
<feature type="chain" id="PRO_0000277536" description="Putative NAD(P)H nitroreductase SA2311">
    <location>
        <begin position="1"/>
        <end position="223"/>
    </location>
</feature>
<accession>Q7A3H8</accession>
<dbReference type="EC" id="1.-.-.-"/>
<dbReference type="EMBL" id="BA000018">
    <property type="protein sequence ID" value="BAB43614.1"/>
    <property type="molecule type" value="Genomic_DNA"/>
</dbReference>
<dbReference type="PIR" id="D90056">
    <property type="entry name" value="D90056"/>
</dbReference>
<dbReference type="RefSeq" id="WP_000069098.1">
    <property type="nucleotide sequence ID" value="NC_002745.2"/>
</dbReference>
<dbReference type="SMR" id="Q7A3H8"/>
<dbReference type="EnsemblBacteria" id="BAB43614">
    <property type="protein sequence ID" value="BAB43614"/>
    <property type="gene ID" value="BAB43614"/>
</dbReference>
<dbReference type="KEGG" id="sau:SA2311"/>
<dbReference type="HOGENOM" id="CLU_070764_4_1_9"/>
<dbReference type="GO" id="GO:0005829">
    <property type="term" value="C:cytosol"/>
    <property type="evidence" value="ECO:0007669"/>
    <property type="project" value="TreeGrafter"/>
</dbReference>
<dbReference type="GO" id="GO:0046857">
    <property type="term" value="F:oxidoreductase activity, acting on other nitrogenous compounds as donors, with NAD or NADP as acceptor"/>
    <property type="evidence" value="ECO:0007669"/>
    <property type="project" value="TreeGrafter"/>
</dbReference>
<dbReference type="GO" id="GO:0046256">
    <property type="term" value="P:2,4,6-trinitrotoluene catabolic process"/>
    <property type="evidence" value="ECO:0007669"/>
    <property type="project" value="TreeGrafter"/>
</dbReference>
<dbReference type="CDD" id="cd02149">
    <property type="entry name" value="NfsB-like"/>
    <property type="match status" value="1"/>
</dbReference>
<dbReference type="FunFam" id="3.40.109.10:FF:000008">
    <property type="entry name" value="Putative NAD(P)H nitroreductase"/>
    <property type="match status" value="1"/>
</dbReference>
<dbReference type="Gene3D" id="3.40.109.10">
    <property type="entry name" value="NADH Oxidase"/>
    <property type="match status" value="1"/>
</dbReference>
<dbReference type="InterPro" id="IPR033878">
    <property type="entry name" value="NfsB-like"/>
</dbReference>
<dbReference type="InterPro" id="IPR029479">
    <property type="entry name" value="Nitroreductase"/>
</dbReference>
<dbReference type="InterPro" id="IPR000415">
    <property type="entry name" value="Nitroreductase-like"/>
</dbReference>
<dbReference type="InterPro" id="IPR050627">
    <property type="entry name" value="Nitroreductase/BluB"/>
</dbReference>
<dbReference type="PANTHER" id="PTHR23026">
    <property type="entry name" value="NADPH NITROREDUCTASE"/>
    <property type="match status" value="1"/>
</dbReference>
<dbReference type="PANTHER" id="PTHR23026:SF125">
    <property type="entry name" value="OXYGEN-INSENSITIVE NAD(P)H NITROREDUCTASE"/>
    <property type="match status" value="1"/>
</dbReference>
<dbReference type="Pfam" id="PF00881">
    <property type="entry name" value="Nitroreductase"/>
    <property type="match status" value="1"/>
</dbReference>
<dbReference type="SUPFAM" id="SSF55469">
    <property type="entry name" value="FMN-dependent nitroreductase-like"/>
    <property type="match status" value="1"/>
</dbReference>
<protein>
    <recommendedName>
        <fullName>Putative NAD(P)H nitroreductase SA2311</fullName>
        <ecNumber>1.-.-.-</ecNumber>
    </recommendedName>
</protein>
<name>Y2311_STAAN</name>
<organism>
    <name type="scientific">Staphylococcus aureus (strain N315)</name>
    <dbReference type="NCBI Taxonomy" id="158879"/>
    <lineage>
        <taxon>Bacteria</taxon>
        <taxon>Bacillati</taxon>
        <taxon>Bacillota</taxon>
        <taxon>Bacilli</taxon>
        <taxon>Bacillales</taxon>
        <taxon>Staphylococcaceae</taxon>
        <taxon>Staphylococcus</taxon>
    </lineage>
</organism>